<comment type="function">
    <text evidence="1 2">Dual specificity phosphatase able to dephosphorylate phosphotyrosine, phosphoserine and phosphothreonine residues within the same substrate, with a preference for phosphotyrosine as a substrate (By similarity). Involved in the modulation of intracellular signaling cascades. In skeletal muscle regulates systemic glucose homeostasis by activating, AMPK, an energy sensor protein kinase. Affects MAP kinase signaling though modulation of the ERK1/2 cascade in skeletal muscle promoting muscle cell differentiation, development and atrophy (By similarity).</text>
</comment>
<comment type="catalytic activity">
    <reaction evidence="1">
        <text>O-phospho-L-tyrosyl-[protein] + H2O = L-tyrosyl-[protein] + phosphate</text>
        <dbReference type="Rhea" id="RHEA:10684"/>
        <dbReference type="Rhea" id="RHEA-COMP:10136"/>
        <dbReference type="Rhea" id="RHEA-COMP:20101"/>
        <dbReference type="ChEBI" id="CHEBI:15377"/>
        <dbReference type="ChEBI" id="CHEBI:43474"/>
        <dbReference type="ChEBI" id="CHEBI:46858"/>
        <dbReference type="ChEBI" id="CHEBI:61978"/>
        <dbReference type="EC" id="3.1.3.48"/>
    </reaction>
</comment>
<comment type="catalytic activity">
    <reaction evidence="1">
        <text>O-phospho-L-seryl-[protein] + H2O = L-seryl-[protein] + phosphate</text>
        <dbReference type="Rhea" id="RHEA:20629"/>
        <dbReference type="Rhea" id="RHEA-COMP:9863"/>
        <dbReference type="Rhea" id="RHEA-COMP:11604"/>
        <dbReference type="ChEBI" id="CHEBI:15377"/>
        <dbReference type="ChEBI" id="CHEBI:29999"/>
        <dbReference type="ChEBI" id="CHEBI:43474"/>
        <dbReference type="ChEBI" id="CHEBI:83421"/>
        <dbReference type="EC" id="3.1.3.16"/>
    </reaction>
</comment>
<comment type="catalytic activity">
    <reaction evidence="1">
        <text>O-phospho-L-threonyl-[protein] + H2O = L-threonyl-[protein] + phosphate</text>
        <dbReference type="Rhea" id="RHEA:47004"/>
        <dbReference type="Rhea" id="RHEA-COMP:11060"/>
        <dbReference type="Rhea" id="RHEA-COMP:11605"/>
        <dbReference type="ChEBI" id="CHEBI:15377"/>
        <dbReference type="ChEBI" id="CHEBI:30013"/>
        <dbReference type="ChEBI" id="CHEBI:43474"/>
        <dbReference type="ChEBI" id="CHEBI:61977"/>
        <dbReference type="EC" id="3.1.3.16"/>
    </reaction>
</comment>
<comment type="subunit">
    <text evidence="1 2">Homodimer (By similarity). Interacts with PRKAA2 (By similarity).</text>
</comment>
<comment type="subcellular location">
    <subcellularLocation>
        <location evidence="1">Cytoplasm</location>
    </subcellularLocation>
    <subcellularLocation>
        <location evidence="2">Nucleus</location>
    </subcellularLocation>
</comment>
<comment type="similarity">
    <text evidence="4">Belongs to the protein-tyrosine phosphatase family. Non-receptor class dual specificity subfamily.</text>
</comment>
<accession>P0C594</accession>
<organism>
    <name type="scientific">Pan troglodytes</name>
    <name type="common">Chimpanzee</name>
    <dbReference type="NCBI Taxonomy" id="9598"/>
    <lineage>
        <taxon>Eukaryota</taxon>
        <taxon>Metazoa</taxon>
        <taxon>Chordata</taxon>
        <taxon>Craniata</taxon>
        <taxon>Vertebrata</taxon>
        <taxon>Euteleostomi</taxon>
        <taxon>Mammalia</taxon>
        <taxon>Eutheria</taxon>
        <taxon>Euarchontoglires</taxon>
        <taxon>Primates</taxon>
        <taxon>Haplorrhini</taxon>
        <taxon>Catarrhini</taxon>
        <taxon>Hominidae</taxon>
        <taxon>Pan</taxon>
    </lineage>
</organism>
<sequence length="220" mass="25377">MTSGEVKTSLKNAYSSAKRLSLKMEEEGEEEDYCTPGAFELERLFWKGSPQYTHVNEVWPKLYIGDEATALDRYRLQKAGFTHVLNAAHGRWNVDTGPDYYRDMDIQYHGVEADDLPTFDLSVFFYPAAAFIDRALRDDHSKILVHCVMGRSRSATLVLAYLMIHKDMTLVDAIQQVAKNRCVLPNRGFLKQLRELDKQLVQQRRQAQRQDGEEEDGREL</sequence>
<reference key="1">
    <citation type="journal article" date="2005" name="Nature">
        <title>Initial sequence of the chimpanzee genome and comparison with the human genome.</title>
        <authorList>
            <consortium name="Chimpanzee sequencing and analysis consortium"/>
        </authorList>
    </citation>
    <scope>NUCLEOTIDE SEQUENCE [LARGE SCALE GENOMIC DNA]</scope>
</reference>
<feature type="chain" id="PRO_0000295880" description="Dual specificity phosphatase 29">
    <location>
        <begin position="1"/>
        <end position="220"/>
    </location>
</feature>
<feature type="domain" description="Tyrosine-protein phosphatase" evidence="3">
    <location>
        <begin position="54"/>
        <end position="202"/>
    </location>
</feature>
<feature type="active site" description="Phosphocysteine intermediate" evidence="3">
    <location>
        <position position="147"/>
    </location>
</feature>
<feature type="binding site" evidence="1">
    <location>
        <begin position="146"/>
        <end position="153"/>
    </location>
    <ligand>
        <name>substrate</name>
    </ligand>
</feature>
<keyword id="KW-0963">Cytoplasm</keyword>
<keyword id="KW-0378">Hydrolase</keyword>
<keyword id="KW-0539">Nucleus</keyword>
<keyword id="KW-0904">Protein phosphatase</keyword>
<keyword id="KW-1185">Reference proteome</keyword>
<proteinExistence type="inferred from homology"/>
<gene>
    <name type="primary">DUSP29</name>
    <name type="synonym">DUPD1</name>
</gene>
<evidence type="ECO:0000250" key="1">
    <source>
        <dbReference type="UniProtKB" id="Q68J44"/>
    </source>
</evidence>
<evidence type="ECO:0000250" key="2">
    <source>
        <dbReference type="UniProtKB" id="Q8BK84"/>
    </source>
</evidence>
<evidence type="ECO:0000255" key="3">
    <source>
        <dbReference type="PROSITE-ProRule" id="PRU00160"/>
    </source>
</evidence>
<evidence type="ECO:0000305" key="4"/>
<name>DUS29_PANTR</name>
<protein>
    <recommendedName>
        <fullName>Dual specificity phosphatase 29</fullName>
    </recommendedName>
    <alternativeName>
        <fullName>Dual specificity phosphatase DUPD1</fullName>
        <ecNumber evidence="1">3.1.3.16</ecNumber>
        <ecNumber evidence="1">3.1.3.48</ecNumber>
    </alternativeName>
</protein>
<dbReference type="EC" id="3.1.3.16" evidence="1"/>
<dbReference type="EC" id="3.1.3.48" evidence="1"/>
<dbReference type="EMBL" id="AACZ02115231">
    <property type="status" value="NOT_ANNOTATED_CDS"/>
    <property type="molecule type" value="Genomic_DNA"/>
</dbReference>
<dbReference type="EMBL" id="AACZ02115232">
    <property type="status" value="NOT_ANNOTATED_CDS"/>
    <property type="molecule type" value="Genomic_DNA"/>
</dbReference>
<dbReference type="RefSeq" id="XP_054515685.1">
    <property type="nucleotide sequence ID" value="XM_054659710.2"/>
</dbReference>
<dbReference type="RefSeq" id="XP_521513.4">
    <property type="nucleotide sequence ID" value="XM_521513.8"/>
</dbReference>
<dbReference type="SMR" id="P0C594"/>
<dbReference type="FunCoup" id="P0C594">
    <property type="interactions" value="88"/>
</dbReference>
<dbReference type="STRING" id="9598.ENSPTRP00000004609"/>
<dbReference type="PaxDb" id="9598-ENSPTRP00000004609"/>
<dbReference type="Ensembl" id="ENSPTRT00000004993.5">
    <property type="protein sequence ID" value="ENSPTRP00000004609.4"/>
    <property type="gene ID" value="ENSPTRG00000002653.5"/>
</dbReference>
<dbReference type="GeneID" id="466111"/>
<dbReference type="KEGG" id="ptr:466111"/>
<dbReference type="CTD" id="338599"/>
<dbReference type="VGNC" id="VGNC:51974">
    <property type="gene designation" value="DUSP29"/>
</dbReference>
<dbReference type="eggNOG" id="KOG1716">
    <property type="taxonomic scope" value="Eukaryota"/>
</dbReference>
<dbReference type="GeneTree" id="ENSGT00940000160190"/>
<dbReference type="HOGENOM" id="CLU_027074_11_3_1"/>
<dbReference type="InParanoid" id="P0C594"/>
<dbReference type="OMA" id="NAAHGQR"/>
<dbReference type="TreeFam" id="TF105128"/>
<dbReference type="Proteomes" id="UP000002277">
    <property type="component" value="Chromosome 10"/>
</dbReference>
<dbReference type="Bgee" id="ENSPTRG00000002653">
    <property type="expression patterns" value="Expressed in skeletal muscle tissue and 3 other cell types or tissues"/>
</dbReference>
<dbReference type="GO" id="GO:0005737">
    <property type="term" value="C:cytoplasm"/>
    <property type="evidence" value="ECO:0000250"/>
    <property type="project" value="UniProtKB"/>
</dbReference>
<dbReference type="GO" id="GO:0005634">
    <property type="term" value="C:nucleus"/>
    <property type="evidence" value="ECO:0000250"/>
    <property type="project" value="UniProtKB"/>
</dbReference>
<dbReference type="GO" id="GO:0032991">
    <property type="term" value="C:protein-containing complex"/>
    <property type="evidence" value="ECO:0007669"/>
    <property type="project" value="Ensembl"/>
</dbReference>
<dbReference type="GO" id="GO:0033549">
    <property type="term" value="F:MAP kinase phosphatase activity"/>
    <property type="evidence" value="ECO:0000250"/>
    <property type="project" value="UniProtKB"/>
</dbReference>
<dbReference type="GO" id="GO:0042803">
    <property type="term" value="F:protein homodimerization activity"/>
    <property type="evidence" value="ECO:0007669"/>
    <property type="project" value="Ensembl"/>
</dbReference>
<dbReference type="GO" id="GO:0004722">
    <property type="term" value="F:protein serine/threonine phosphatase activity"/>
    <property type="evidence" value="ECO:0007669"/>
    <property type="project" value="UniProtKB-EC"/>
</dbReference>
<dbReference type="GO" id="GO:0004725">
    <property type="term" value="F:protein tyrosine phosphatase activity"/>
    <property type="evidence" value="ECO:0007669"/>
    <property type="project" value="UniProtKB-EC"/>
</dbReference>
<dbReference type="GO" id="GO:0008138">
    <property type="term" value="F:protein tyrosine/serine/threonine phosphatase activity"/>
    <property type="evidence" value="ECO:0000250"/>
    <property type="project" value="UniProtKB"/>
</dbReference>
<dbReference type="GO" id="GO:0042593">
    <property type="term" value="P:glucose homeostasis"/>
    <property type="evidence" value="ECO:0007669"/>
    <property type="project" value="Ensembl"/>
</dbReference>
<dbReference type="GO" id="GO:0042692">
    <property type="term" value="P:muscle cell differentiation"/>
    <property type="evidence" value="ECO:0000250"/>
    <property type="project" value="UniProtKB"/>
</dbReference>
<dbReference type="GO" id="GO:0070373">
    <property type="term" value="P:negative regulation of ERK1 and ERK2 cascade"/>
    <property type="evidence" value="ECO:0000250"/>
    <property type="project" value="UniProtKB"/>
</dbReference>
<dbReference type="GO" id="GO:0043409">
    <property type="term" value="P:negative regulation of MAPK cascade"/>
    <property type="evidence" value="ECO:0000318"/>
    <property type="project" value="GO_Central"/>
</dbReference>
<dbReference type="GO" id="GO:0006470">
    <property type="term" value="P:protein dephosphorylation"/>
    <property type="evidence" value="ECO:0000250"/>
    <property type="project" value="UniProtKB"/>
</dbReference>
<dbReference type="CDD" id="cd14575">
    <property type="entry name" value="DUPD1"/>
    <property type="match status" value="1"/>
</dbReference>
<dbReference type="FunFam" id="3.90.190.10:FF:000037">
    <property type="entry name" value="dual specificity protein phosphatase 26"/>
    <property type="match status" value="1"/>
</dbReference>
<dbReference type="Gene3D" id="3.90.190.10">
    <property type="entry name" value="Protein tyrosine phosphatase superfamily"/>
    <property type="match status" value="1"/>
</dbReference>
<dbReference type="InterPro" id="IPR020405">
    <property type="entry name" value="Atypical_DUSP_subfamA"/>
</dbReference>
<dbReference type="InterPro" id="IPR000340">
    <property type="entry name" value="Dual-sp_phosphatase_cat-dom"/>
</dbReference>
<dbReference type="InterPro" id="IPR029021">
    <property type="entry name" value="Prot-tyrosine_phosphatase-like"/>
</dbReference>
<dbReference type="InterPro" id="IPR016130">
    <property type="entry name" value="Tyr_Pase_AS"/>
</dbReference>
<dbReference type="InterPro" id="IPR000387">
    <property type="entry name" value="Tyr_Pase_dom"/>
</dbReference>
<dbReference type="InterPro" id="IPR020422">
    <property type="entry name" value="TYR_PHOSPHATASE_DUAL_dom"/>
</dbReference>
<dbReference type="PANTHER" id="PTHR45682">
    <property type="entry name" value="AGAP008228-PA"/>
    <property type="match status" value="1"/>
</dbReference>
<dbReference type="PANTHER" id="PTHR45682:SF6">
    <property type="entry name" value="DUAL SPECIFICITY PHOSPHATASE 29"/>
    <property type="match status" value="1"/>
</dbReference>
<dbReference type="Pfam" id="PF00782">
    <property type="entry name" value="DSPc"/>
    <property type="match status" value="1"/>
</dbReference>
<dbReference type="PRINTS" id="PR01908">
    <property type="entry name" value="ADSPHPHTASE"/>
</dbReference>
<dbReference type="PRINTS" id="PR01909">
    <property type="entry name" value="ADSPHPHTASEA"/>
</dbReference>
<dbReference type="SMART" id="SM00195">
    <property type="entry name" value="DSPc"/>
    <property type="match status" value="1"/>
</dbReference>
<dbReference type="SUPFAM" id="SSF52799">
    <property type="entry name" value="(Phosphotyrosine protein) phosphatases II"/>
    <property type="match status" value="1"/>
</dbReference>
<dbReference type="PROSITE" id="PS00383">
    <property type="entry name" value="TYR_PHOSPHATASE_1"/>
    <property type="match status" value="1"/>
</dbReference>
<dbReference type="PROSITE" id="PS50056">
    <property type="entry name" value="TYR_PHOSPHATASE_2"/>
    <property type="match status" value="1"/>
</dbReference>
<dbReference type="PROSITE" id="PS50054">
    <property type="entry name" value="TYR_PHOSPHATASE_DUAL"/>
    <property type="match status" value="1"/>
</dbReference>